<gene>
    <name evidence="2" type="primary">pgap3</name>
    <name type="synonym">perld1</name>
</gene>
<protein>
    <recommendedName>
        <fullName evidence="2">GPI-specific phospholipase A2-like PGAP3</fullName>
        <ecNumber evidence="1">3.1.1.-</ecNumber>
    </recommendedName>
    <alternativeName>
        <fullName>PER1-like domain-containing protein 1</fullName>
    </alternativeName>
    <alternativeName>
        <fullName>Post-GPI attachment to proteins factor 3</fullName>
    </alternativeName>
</protein>
<proteinExistence type="evidence at transcript level"/>
<reference key="1">
    <citation type="submission" date="2006-07" db="EMBL/GenBank/DDBJ databases">
        <authorList>
            <consortium name="NIH - Xenopus Gene Collection (XGC) project"/>
        </authorList>
    </citation>
    <scope>NUCLEOTIDE SEQUENCE [LARGE SCALE MRNA]</scope>
    <source>
        <tissue>Testis</tissue>
    </source>
</reference>
<accession>Q0VFE3</accession>
<dbReference type="EC" id="3.1.1.-" evidence="1"/>
<dbReference type="EMBL" id="BC118861">
    <property type="protein sequence ID" value="AAI18862.1"/>
    <property type="molecule type" value="mRNA"/>
</dbReference>
<dbReference type="RefSeq" id="NP_001072247.1">
    <property type="nucleotide sequence ID" value="NM_001078779.1"/>
</dbReference>
<dbReference type="FunCoup" id="Q0VFE3">
    <property type="interactions" value="386"/>
</dbReference>
<dbReference type="STRING" id="8364.ENSXETP00000046129"/>
<dbReference type="GlyCosmos" id="Q0VFE3">
    <property type="glycosylation" value="1 site, No reported glycans"/>
</dbReference>
<dbReference type="PaxDb" id="8364-ENSXETP00000033156"/>
<dbReference type="DNASU" id="779696"/>
<dbReference type="GeneID" id="779696"/>
<dbReference type="KEGG" id="xtr:779696"/>
<dbReference type="AGR" id="Xenbase:XB-GENE-947217"/>
<dbReference type="CTD" id="93210"/>
<dbReference type="Xenbase" id="XB-GENE-947217">
    <property type="gene designation" value="pgap3"/>
</dbReference>
<dbReference type="eggNOG" id="KOG2970">
    <property type="taxonomic scope" value="Eukaryota"/>
</dbReference>
<dbReference type="HOGENOM" id="CLU_032917_1_0_1"/>
<dbReference type="InParanoid" id="Q0VFE3"/>
<dbReference type="OMA" id="DFMIEDC"/>
<dbReference type="OrthoDB" id="419770at2759"/>
<dbReference type="PhylomeDB" id="Q0VFE3"/>
<dbReference type="Proteomes" id="UP000008143">
    <property type="component" value="Chromosome 10"/>
</dbReference>
<dbReference type="Bgee" id="ENSXETG00000015142">
    <property type="expression patterns" value="Expressed in skeletal muscle tissue and 12 other cell types or tissues"/>
</dbReference>
<dbReference type="GO" id="GO:0005789">
    <property type="term" value="C:endoplasmic reticulum membrane"/>
    <property type="evidence" value="ECO:0000250"/>
    <property type="project" value="UniProtKB"/>
</dbReference>
<dbReference type="GO" id="GO:0000139">
    <property type="term" value="C:Golgi membrane"/>
    <property type="evidence" value="ECO:0007669"/>
    <property type="project" value="UniProtKB-SubCell"/>
</dbReference>
<dbReference type="GO" id="GO:0016788">
    <property type="term" value="F:hydrolase activity, acting on ester bonds"/>
    <property type="evidence" value="ECO:0000250"/>
    <property type="project" value="UniProtKB"/>
</dbReference>
<dbReference type="GO" id="GO:0006506">
    <property type="term" value="P:GPI anchor biosynthetic process"/>
    <property type="evidence" value="ECO:0007669"/>
    <property type="project" value="UniProtKB-KW"/>
</dbReference>
<dbReference type="GO" id="GO:0006505">
    <property type="term" value="P:GPI anchor metabolic process"/>
    <property type="evidence" value="ECO:0000250"/>
    <property type="project" value="UniProtKB"/>
</dbReference>
<dbReference type="InterPro" id="IPR007217">
    <property type="entry name" value="Per1-like"/>
</dbReference>
<dbReference type="PANTHER" id="PTHR13148">
    <property type="entry name" value="PER1-RELATED"/>
    <property type="match status" value="1"/>
</dbReference>
<dbReference type="PANTHER" id="PTHR13148:SF0">
    <property type="entry name" value="POST-GPI ATTACHMENT TO PROTEINS FACTOR 3"/>
    <property type="match status" value="1"/>
</dbReference>
<dbReference type="Pfam" id="PF04080">
    <property type="entry name" value="Per1"/>
    <property type="match status" value="1"/>
</dbReference>
<sequence length="316" mass="36736">MAPFLVLFLAGVVAASRGDREPVYRDCVTLCERNNCTGSRLTDFRAEQPLYMRVTGWTCLDDCRYQCMWYTVSLYLKEGHEVPQFHGKWPFSRFLFFQEPASALASFLNGVASLLMLLRYRSSVPSSCQMYRTCLAFSMVSVNAWFWSTIFHTRDTALTEKMDYFCASSVILHSIYLCCMRTFGLQYPSIANGFGAFLVLLFACHVSYLTLGRFDYSYNMAANTGFGVLNLMWWLAWCFRRRFHQPYLWKCVLVVISLQSLALLELLDFPPVMWILDAHALWHFSTVPLHFLFYSFLKDDSLYLLKINHDDIPKLD</sequence>
<name>PGAP3_XENTR</name>
<evidence type="ECO:0000250" key="1">
    <source>
        <dbReference type="UniProtKB" id="A2V7M9"/>
    </source>
</evidence>
<evidence type="ECO:0000250" key="2">
    <source>
        <dbReference type="UniProtKB" id="Q96FM1"/>
    </source>
</evidence>
<evidence type="ECO:0000255" key="3"/>
<evidence type="ECO:0000305" key="4"/>
<keyword id="KW-0325">Glycoprotein</keyword>
<keyword id="KW-0333">Golgi apparatus</keyword>
<keyword id="KW-0337">GPI-anchor biosynthesis</keyword>
<keyword id="KW-0378">Hydrolase</keyword>
<keyword id="KW-0472">Membrane</keyword>
<keyword id="KW-1185">Reference proteome</keyword>
<keyword id="KW-0732">Signal</keyword>
<keyword id="KW-0812">Transmembrane</keyword>
<keyword id="KW-1133">Transmembrane helix</keyword>
<comment type="function">
    <text evidence="1">Involved in the fatty acid remodeling steps of GPI-anchor maturation where the unsaturated acyl chain at sn-2 of inositol phosphate is replaced by a saturated stearoyl chain. May catalyze the first step of the fatty acid remodeling, by removing the unsaturated acyl chain at sn-2 of inositol phosphate, generating a lyso-GPI intermediate. The fatty acid remodeling steps is critical for the integration of GPI-APs into lipid rafts.</text>
</comment>
<comment type="subcellular location">
    <subcellularLocation>
        <location evidence="1">Golgi apparatus membrane</location>
        <topology evidence="3">Multi-pass membrane protein</topology>
    </subcellularLocation>
</comment>
<comment type="similarity">
    <text evidence="4">Belongs to the PGAP3 family.</text>
</comment>
<feature type="signal peptide" evidence="3">
    <location>
        <begin position="1"/>
        <end position="18"/>
    </location>
</feature>
<feature type="chain" id="PRO_0000339360" description="GPI-specific phospholipase A2-like PGAP3">
    <location>
        <begin position="19"/>
        <end position="316"/>
    </location>
</feature>
<feature type="topological domain" description="Lumenal" evidence="3">
    <location>
        <begin position="19"/>
        <end position="93"/>
    </location>
</feature>
<feature type="transmembrane region" description="Helical" evidence="3">
    <location>
        <begin position="94"/>
        <end position="114"/>
    </location>
</feature>
<feature type="topological domain" description="Cytoplasmic" evidence="3">
    <location>
        <begin position="115"/>
        <end position="132"/>
    </location>
</feature>
<feature type="transmembrane region" description="Helical" evidence="3">
    <location>
        <begin position="133"/>
        <end position="153"/>
    </location>
</feature>
<feature type="topological domain" description="Lumenal" evidence="3">
    <location>
        <begin position="154"/>
        <end position="163"/>
    </location>
</feature>
<feature type="transmembrane region" description="Helical" evidence="3">
    <location>
        <begin position="164"/>
        <end position="180"/>
    </location>
</feature>
<feature type="topological domain" description="Cytoplasmic" evidence="3">
    <location>
        <begin position="181"/>
        <end position="182"/>
    </location>
</feature>
<feature type="transmembrane region" description="Helical" evidence="3">
    <location>
        <begin position="183"/>
        <end position="203"/>
    </location>
</feature>
<feature type="topological domain" description="Lumenal" evidence="3">
    <location>
        <begin position="204"/>
        <end position="218"/>
    </location>
</feature>
<feature type="transmembrane region" description="Helical" evidence="3">
    <location>
        <begin position="219"/>
        <end position="239"/>
    </location>
</feature>
<feature type="topological domain" description="Cytoplasmic" evidence="3">
    <location>
        <begin position="240"/>
        <end position="251"/>
    </location>
</feature>
<feature type="transmembrane region" description="Helical" evidence="3">
    <location>
        <begin position="252"/>
        <end position="272"/>
    </location>
</feature>
<feature type="topological domain" description="Lumenal" evidence="3">
    <location>
        <position position="273"/>
    </location>
</feature>
<feature type="transmembrane region" description="Helical" evidence="3">
    <location>
        <begin position="274"/>
        <end position="293"/>
    </location>
</feature>
<feature type="topological domain" description="Cytoplasmic" evidence="3">
    <location>
        <begin position="294"/>
        <end position="316"/>
    </location>
</feature>
<feature type="glycosylation site" description="N-linked (GlcNAc...) asparagine" evidence="3">
    <location>
        <position position="35"/>
    </location>
</feature>
<organism>
    <name type="scientific">Xenopus tropicalis</name>
    <name type="common">Western clawed frog</name>
    <name type="synonym">Silurana tropicalis</name>
    <dbReference type="NCBI Taxonomy" id="8364"/>
    <lineage>
        <taxon>Eukaryota</taxon>
        <taxon>Metazoa</taxon>
        <taxon>Chordata</taxon>
        <taxon>Craniata</taxon>
        <taxon>Vertebrata</taxon>
        <taxon>Euteleostomi</taxon>
        <taxon>Amphibia</taxon>
        <taxon>Batrachia</taxon>
        <taxon>Anura</taxon>
        <taxon>Pipoidea</taxon>
        <taxon>Pipidae</taxon>
        <taxon>Xenopodinae</taxon>
        <taxon>Xenopus</taxon>
        <taxon>Silurana</taxon>
    </lineage>
</organism>